<dbReference type="EC" id="3.5.99.7" evidence="1"/>
<dbReference type="EMBL" id="CP000547">
    <property type="protein sequence ID" value="ABO03929.1"/>
    <property type="molecule type" value="Genomic_DNA"/>
</dbReference>
<dbReference type="RefSeq" id="WP_004184549.1">
    <property type="nucleotide sequence ID" value="NZ_CP007801.1"/>
</dbReference>
<dbReference type="SMR" id="A3ME84"/>
<dbReference type="KEGG" id="bmaz:BM44_4464"/>
<dbReference type="KEGG" id="bmn:BMA10247_A1385"/>
<dbReference type="PATRIC" id="fig|320389.8.peg.5096"/>
<dbReference type="GO" id="GO:0008660">
    <property type="term" value="F:1-aminocyclopropane-1-carboxylate deaminase activity"/>
    <property type="evidence" value="ECO:0007669"/>
    <property type="project" value="UniProtKB-UniRule"/>
</dbReference>
<dbReference type="GO" id="GO:0019148">
    <property type="term" value="F:D-cysteine desulfhydrase activity"/>
    <property type="evidence" value="ECO:0007669"/>
    <property type="project" value="TreeGrafter"/>
</dbReference>
<dbReference type="GO" id="GO:0030170">
    <property type="term" value="F:pyridoxal phosphate binding"/>
    <property type="evidence" value="ECO:0007669"/>
    <property type="project" value="InterPro"/>
</dbReference>
<dbReference type="GO" id="GO:0018871">
    <property type="term" value="P:1-aminocyclopropane-1-carboxylate metabolic process"/>
    <property type="evidence" value="ECO:0007669"/>
    <property type="project" value="UniProtKB-UniRule"/>
</dbReference>
<dbReference type="GO" id="GO:0009310">
    <property type="term" value="P:amine catabolic process"/>
    <property type="evidence" value="ECO:0007669"/>
    <property type="project" value="InterPro"/>
</dbReference>
<dbReference type="CDD" id="cd06449">
    <property type="entry name" value="ACCD"/>
    <property type="match status" value="1"/>
</dbReference>
<dbReference type="FunFam" id="3.40.50.1100:FF:000053">
    <property type="entry name" value="1-aminocyclopropane-1-carboxylate deaminase"/>
    <property type="match status" value="1"/>
</dbReference>
<dbReference type="Gene3D" id="3.40.50.1100">
    <property type="match status" value="2"/>
</dbReference>
<dbReference type="HAMAP" id="MF_00807">
    <property type="entry name" value="ACC_deaminase"/>
    <property type="match status" value="1"/>
</dbReference>
<dbReference type="InterPro" id="IPR027278">
    <property type="entry name" value="ACCD_DCysDesulf"/>
</dbReference>
<dbReference type="InterPro" id="IPR005965">
    <property type="entry name" value="ACP_carboxylate_deaminase"/>
</dbReference>
<dbReference type="InterPro" id="IPR020601">
    <property type="entry name" value="ACP_carboxylate_deaminase_bac"/>
</dbReference>
<dbReference type="InterPro" id="IPR001926">
    <property type="entry name" value="TrpB-like_PALP"/>
</dbReference>
<dbReference type="InterPro" id="IPR036052">
    <property type="entry name" value="TrpB-like_PALP_sf"/>
</dbReference>
<dbReference type="NCBIfam" id="TIGR01274">
    <property type="entry name" value="ACC_deam"/>
    <property type="match status" value="1"/>
</dbReference>
<dbReference type="PANTHER" id="PTHR43780">
    <property type="entry name" value="1-AMINOCYCLOPROPANE-1-CARBOXYLATE DEAMINASE-RELATED"/>
    <property type="match status" value="1"/>
</dbReference>
<dbReference type="PANTHER" id="PTHR43780:SF2">
    <property type="entry name" value="1-AMINOCYCLOPROPANE-1-CARBOXYLATE DEAMINASE-RELATED"/>
    <property type="match status" value="1"/>
</dbReference>
<dbReference type="Pfam" id="PF00291">
    <property type="entry name" value="PALP"/>
    <property type="match status" value="1"/>
</dbReference>
<dbReference type="PIRSF" id="PIRSF006278">
    <property type="entry name" value="ACCD_DCysDesulf"/>
    <property type="match status" value="1"/>
</dbReference>
<dbReference type="SUPFAM" id="SSF53686">
    <property type="entry name" value="Tryptophan synthase beta subunit-like PLP-dependent enzymes"/>
    <property type="match status" value="1"/>
</dbReference>
<comment type="function">
    <text evidence="1">Catalyzes a cyclopropane ring-opening reaction, the irreversible conversion of 1-aminocyclopropane-1-carboxylate (ACC) to ammonia and alpha-ketobutyrate. Allows growth on ACC as a nitrogen source.</text>
</comment>
<comment type="catalytic activity">
    <reaction evidence="1">
        <text>1-aminocyclopropane-1-carboxylate + H2O = 2-oxobutanoate + NH4(+)</text>
        <dbReference type="Rhea" id="RHEA:16933"/>
        <dbReference type="ChEBI" id="CHEBI:15377"/>
        <dbReference type="ChEBI" id="CHEBI:16763"/>
        <dbReference type="ChEBI" id="CHEBI:28938"/>
        <dbReference type="ChEBI" id="CHEBI:58360"/>
        <dbReference type="EC" id="3.5.99.7"/>
    </reaction>
</comment>
<comment type="cofactor">
    <cofactor evidence="1">
        <name>pyridoxal 5'-phosphate</name>
        <dbReference type="ChEBI" id="CHEBI:597326"/>
    </cofactor>
</comment>
<comment type="subunit">
    <text evidence="1">Homotrimer.</text>
</comment>
<comment type="similarity">
    <text evidence="1">Belongs to the ACC deaminase/D-cysteine desulfhydrase family.</text>
</comment>
<gene>
    <name evidence="1" type="primary">acdS</name>
    <name type="ordered locus">BMA10247_A1385</name>
</gene>
<accession>A3ME84</accession>
<proteinExistence type="inferred from homology"/>
<organism>
    <name type="scientific">Burkholderia mallei (strain NCTC 10247)</name>
    <dbReference type="NCBI Taxonomy" id="320389"/>
    <lineage>
        <taxon>Bacteria</taxon>
        <taxon>Pseudomonadati</taxon>
        <taxon>Pseudomonadota</taxon>
        <taxon>Betaproteobacteria</taxon>
        <taxon>Burkholderiales</taxon>
        <taxon>Burkholderiaceae</taxon>
        <taxon>Burkholderia</taxon>
        <taxon>pseudomallei group</taxon>
    </lineage>
</organism>
<keyword id="KW-0378">Hydrolase</keyword>
<keyword id="KW-0663">Pyridoxal phosphate</keyword>
<feature type="chain" id="PRO_1000047087" description="1-aminocyclopropane-1-carboxylate deaminase">
    <location>
        <begin position="1"/>
        <end position="338"/>
    </location>
</feature>
<feature type="active site" description="Nucleophile" evidence="1">
    <location>
        <position position="78"/>
    </location>
</feature>
<feature type="modified residue" description="N6-(pyridoxal phosphate)lysine" evidence="1">
    <location>
        <position position="51"/>
    </location>
</feature>
<sequence length="338" mass="36481">MNLQKFSRYPLTFGPTPIQPLKRLSAHLGGKVELYAKRDDCNSGLAFGGNKTRKLEYLIPDALAQGCDTLVSIGGIQSNQTRQVAAVAAHLGMKCVLVQENWVNYHDAVYDRVGNIQMSRMMGADVRLVPDGFDIGFRKSWEDALADVRARGGKPYAIPAGCSDHPLGGLGFVGFAEEVRAQEAELGFQFDYVVVCSVTGSTQAGMVVGFAADGRADRVIGVDASAKPAQTREQILRIAKHTADRVELGRDITSADVVLDERFGGPEYGLPNEGTLEAIRLCAKLEGVLTDPVYEGKSMHGMIEKVRLGEFPAGSKVLYAHLGGVPALNAYSFLFRDG</sequence>
<protein>
    <recommendedName>
        <fullName evidence="1">1-aminocyclopropane-1-carboxylate deaminase</fullName>
        <shortName evidence="1">ACC deaminase</shortName>
        <shortName evidence="1">ACCD</shortName>
        <ecNumber evidence="1">3.5.99.7</ecNumber>
    </recommendedName>
</protein>
<evidence type="ECO:0000255" key="1">
    <source>
        <dbReference type="HAMAP-Rule" id="MF_00807"/>
    </source>
</evidence>
<name>1A1D_BURM7</name>
<reference key="1">
    <citation type="journal article" date="2010" name="Genome Biol. Evol.">
        <title>Continuing evolution of Burkholderia mallei through genome reduction and large-scale rearrangements.</title>
        <authorList>
            <person name="Losada L."/>
            <person name="Ronning C.M."/>
            <person name="DeShazer D."/>
            <person name="Woods D."/>
            <person name="Fedorova N."/>
            <person name="Kim H.S."/>
            <person name="Shabalina S.A."/>
            <person name="Pearson T.R."/>
            <person name="Brinkac L."/>
            <person name="Tan P."/>
            <person name="Nandi T."/>
            <person name="Crabtree J."/>
            <person name="Badger J."/>
            <person name="Beckstrom-Sternberg S."/>
            <person name="Saqib M."/>
            <person name="Schutzer S.E."/>
            <person name="Keim P."/>
            <person name="Nierman W.C."/>
        </authorList>
    </citation>
    <scope>NUCLEOTIDE SEQUENCE [LARGE SCALE GENOMIC DNA]</scope>
    <source>
        <strain>NCTC 10247</strain>
    </source>
</reference>